<evidence type="ECO:0000250" key="1"/>
<evidence type="ECO:0000256" key="2">
    <source>
        <dbReference type="SAM" id="MobiDB-lite"/>
    </source>
</evidence>
<evidence type="ECO:0000269" key="3">
    <source>
    </source>
</evidence>
<evidence type="ECO:0000305" key="4"/>
<gene>
    <name type="primary">ltv1</name>
    <name type="ORF">SPAC3F10.17</name>
</gene>
<reference key="1">
    <citation type="journal article" date="2002" name="Nature">
        <title>The genome sequence of Schizosaccharomyces pombe.</title>
        <authorList>
            <person name="Wood V."/>
            <person name="Gwilliam R."/>
            <person name="Rajandream M.A."/>
            <person name="Lyne M.H."/>
            <person name="Lyne R."/>
            <person name="Stewart A."/>
            <person name="Sgouros J.G."/>
            <person name="Peat N."/>
            <person name="Hayles J."/>
            <person name="Baker S.G."/>
            <person name="Basham D."/>
            <person name="Bowman S."/>
            <person name="Brooks K."/>
            <person name="Brown D."/>
            <person name="Brown S."/>
            <person name="Chillingworth T."/>
            <person name="Churcher C.M."/>
            <person name="Collins M."/>
            <person name="Connor R."/>
            <person name="Cronin A."/>
            <person name="Davis P."/>
            <person name="Feltwell T."/>
            <person name="Fraser A."/>
            <person name="Gentles S."/>
            <person name="Goble A."/>
            <person name="Hamlin N."/>
            <person name="Harris D.E."/>
            <person name="Hidalgo J."/>
            <person name="Hodgson G."/>
            <person name="Holroyd S."/>
            <person name="Hornsby T."/>
            <person name="Howarth S."/>
            <person name="Huckle E.J."/>
            <person name="Hunt S."/>
            <person name="Jagels K."/>
            <person name="James K.D."/>
            <person name="Jones L."/>
            <person name="Jones M."/>
            <person name="Leather S."/>
            <person name="McDonald S."/>
            <person name="McLean J."/>
            <person name="Mooney P."/>
            <person name="Moule S."/>
            <person name="Mungall K.L."/>
            <person name="Murphy L.D."/>
            <person name="Niblett D."/>
            <person name="Odell C."/>
            <person name="Oliver K."/>
            <person name="O'Neil S."/>
            <person name="Pearson D."/>
            <person name="Quail M.A."/>
            <person name="Rabbinowitsch E."/>
            <person name="Rutherford K.M."/>
            <person name="Rutter S."/>
            <person name="Saunders D."/>
            <person name="Seeger K."/>
            <person name="Sharp S."/>
            <person name="Skelton J."/>
            <person name="Simmonds M.N."/>
            <person name="Squares R."/>
            <person name="Squares S."/>
            <person name="Stevens K."/>
            <person name="Taylor K."/>
            <person name="Taylor R.G."/>
            <person name="Tivey A."/>
            <person name="Walsh S.V."/>
            <person name="Warren T."/>
            <person name="Whitehead S."/>
            <person name="Woodward J.R."/>
            <person name="Volckaert G."/>
            <person name="Aert R."/>
            <person name="Robben J."/>
            <person name="Grymonprez B."/>
            <person name="Weltjens I."/>
            <person name="Vanstreels E."/>
            <person name="Rieger M."/>
            <person name="Schaefer M."/>
            <person name="Mueller-Auer S."/>
            <person name="Gabel C."/>
            <person name="Fuchs M."/>
            <person name="Duesterhoeft A."/>
            <person name="Fritzc C."/>
            <person name="Holzer E."/>
            <person name="Moestl D."/>
            <person name="Hilbert H."/>
            <person name="Borzym K."/>
            <person name="Langer I."/>
            <person name="Beck A."/>
            <person name="Lehrach H."/>
            <person name="Reinhardt R."/>
            <person name="Pohl T.M."/>
            <person name="Eger P."/>
            <person name="Zimmermann W."/>
            <person name="Wedler H."/>
            <person name="Wambutt R."/>
            <person name="Purnelle B."/>
            <person name="Goffeau A."/>
            <person name="Cadieu E."/>
            <person name="Dreano S."/>
            <person name="Gloux S."/>
            <person name="Lelaure V."/>
            <person name="Mottier S."/>
            <person name="Galibert F."/>
            <person name="Aves S.J."/>
            <person name="Xiang Z."/>
            <person name="Hunt C."/>
            <person name="Moore K."/>
            <person name="Hurst S.M."/>
            <person name="Lucas M."/>
            <person name="Rochet M."/>
            <person name="Gaillardin C."/>
            <person name="Tallada V.A."/>
            <person name="Garzon A."/>
            <person name="Thode G."/>
            <person name="Daga R.R."/>
            <person name="Cruzado L."/>
            <person name="Jimenez J."/>
            <person name="Sanchez M."/>
            <person name="del Rey F."/>
            <person name="Benito J."/>
            <person name="Dominguez A."/>
            <person name="Revuelta J.L."/>
            <person name="Moreno S."/>
            <person name="Armstrong J."/>
            <person name="Forsburg S.L."/>
            <person name="Cerutti L."/>
            <person name="Lowe T."/>
            <person name="McCombie W.R."/>
            <person name="Paulsen I."/>
            <person name="Potashkin J."/>
            <person name="Shpakovski G.V."/>
            <person name="Ussery D."/>
            <person name="Barrell B.G."/>
            <person name="Nurse P."/>
        </authorList>
    </citation>
    <scope>NUCLEOTIDE SEQUENCE [LARGE SCALE GENOMIC DNA]</scope>
    <source>
        <strain>972 / ATCC 24843</strain>
    </source>
</reference>
<reference key="2">
    <citation type="journal article" date="2008" name="J. Proteome Res.">
        <title>Phosphoproteome analysis of fission yeast.</title>
        <authorList>
            <person name="Wilson-Grady J.T."/>
            <person name="Villen J."/>
            <person name="Gygi S.P."/>
        </authorList>
    </citation>
    <scope>PHOSPHORYLATION [LARGE SCALE ANALYSIS] AT SER-171; SER-179; SER-244; SER-245 AND SER-286</scope>
    <scope>IDENTIFICATION BY MASS SPECTROMETRY</scope>
</reference>
<keyword id="KW-0963">Cytoplasm</keyword>
<keyword id="KW-0539">Nucleus</keyword>
<keyword id="KW-0597">Phosphoprotein</keyword>
<keyword id="KW-0653">Protein transport</keyword>
<keyword id="KW-1185">Reference proteome</keyword>
<keyword id="KW-0813">Transport</keyword>
<protein>
    <recommendedName>
        <fullName>Protein LTV1</fullName>
    </recommendedName>
</protein>
<dbReference type="EMBL" id="CU329670">
    <property type="protein sequence ID" value="CAA93315.1"/>
    <property type="molecule type" value="Genomic_DNA"/>
</dbReference>
<dbReference type="PIR" id="T38718">
    <property type="entry name" value="T38718"/>
</dbReference>
<dbReference type="RefSeq" id="NP_593949.1">
    <property type="nucleotide sequence ID" value="NM_001019376.2"/>
</dbReference>
<dbReference type="FunCoup" id="Q10191">
    <property type="interactions" value="354"/>
</dbReference>
<dbReference type="STRING" id="284812.Q10191"/>
<dbReference type="iPTMnet" id="Q10191"/>
<dbReference type="SwissPalm" id="Q10191"/>
<dbReference type="PaxDb" id="4896-SPAC3F10.17.1"/>
<dbReference type="EnsemblFungi" id="SPAC3F10.17.1">
    <property type="protein sequence ID" value="SPAC3F10.17.1:pep"/>
    <property type="gene ID" value="SPAC3F10.17"/>
</dbReference>
<dbReference type="GeneID" id="2541634"/>
<dbReference type="KEGG" id="spo:2541634"/>
<dbReference type="PomBase" id="SPAC3F10.17">
    <property type="gene designation" value="ltv1"/>
</dbReference>
<dbReference type="VEuPathDB" id="FungiDB:SPAC3F10.17"/>
<dbReference type="eggNOG" id="KOG2637">
    <property type="taxonomic scope" value="Eukaryota"/>
</dbReference>
<dbReference type="HOGENOM" id="CLU_028555_1_0_1"/>
<dbReference type="InParanoid" id="Q10191"/>
<dbReference type="OMA" id="TAQHFTL"/>
<dbReference type="PhylomeDB" id="Q10191"/>
<dbReference type="PRO" id="PR:Q10191"/>
<dbReference type="Proteomes" id="UP000002485">
    <property type="component" value="Chromosome I"/>
</dbReference>
<dbReference type="GO" id="GO:0005829">
    <property type="term" value="C:cytosol"/>
    <property type="evidence" value="ECO:0007005"/>
    <property type="project" value="PomBase"/>
</dbReference>
<dbReference type="GO" id="GO:0005634">
    <property type="term" value="C:nucleus"/>
    <property type="evidence" value="ECO:0007005"/>
    <property type="project" value="PomBase"/>
</dbReference>
<dbReference type="GO" id="GO:0030688">
    <property type="term" value="C:preribosome, small subunit precursor"/>
    <property type="evidence" value="ECO:0000318"/>
    <property type="project" value="GO_Central"/>
</dbReference>
<dbReference type="GO" id="GO:0015031">
    <property type="term" value="P:protein transport"/>
    <property type="evidence" value="ECO:0007669"/>
    <property type="project" value="UniProtKB-KW"/>
</dbReference>
<dbReference type="GO" id="GO:0042274">
    <property type="term" value="P:ribosomal small subunit biogenesis"/>
    <property type="evidence" value="ECO:0000318"/>
    <property type="project" value="GO_Central"/>
</dbReference>
<dbReference type="GO" id="GO:0000056">
    <property type="term" value="P:ribosomal small subunit export from nucleus"/>
    <property type="evidence" value="ECO:0000318"/>
    <property type="project" value="GO_Central"/>
</dbReference>
<dbReference type="InterPro" id="IPR007307">
    <property type="entry name" value="Ltv1"/>
</dbReference>
<dbReference type="PANTHER" id="PTHR21531">
    <property type="entry name" value="LOW-TEMPERATURE VIABILITY PROTEIN LTV1-RELATED"/>
    <property type="match status" value="1"/>
</dbReference>
<dbReference type="PANTHER" id="PTHR21531:SF0">
    <property type="entry name" value="PROTEIN LTV1 HOMOLOG"/>
    <property type="match status" value="1"/>
</dbReference>
<dbReference type="Pfam" id="PF04180">
    <property type="entry name" value="LTV"/>
    <property type="match status" value="1"/>
</dbReference>
<organism>
    <name type="scientific">Schizosaccharomyces pombe (strain 972 / ATCC 24843)</name>
    <name type="common">Fission yeast</name>
    <dbReference type="NCBI Taxonomy" id="284812"/>
    <lineage>
        <taxon>Eukaryota</taxon>
        <taxon>Fungi</taxon>
        <taxon>Dikarya</taxon>
        <taxon>Ascomycota</taxon>
        <taxon>Taphrinomycotina</taxon>
        <taxon>Schizosaccharomycetes</taxon>
        <taxon>Schizosaccharomycetales</taxon>
        <taxon>Schizosaccharomycetaceae</taxon>
        <taxon>Schizosaccharomyces</taxon>
    </lineage>
</organism>
<accession>Q10191</accession>
<name>LTV1_SCHPO</name>
<proteinExistence type="evidence at protein level"/>
<sequence>MGKKKFVNKNKAQTFHLVHRSQRDPQYHDENATERVLVSAETLNKTARRLNRQTLDEEYGSTIRPNEGEAANYGIYFDDTEYDYMQHLRNIGNEDATWVEAPATRKTQDKQKKQQIQLRDQPSILPQEVLPSEVELERTYQDQQSVPDAISGFQPDMDPRLREVLEQLEHSDINDEETSDFDEEFEKLVASGKADESEFYAQPFVEEGEKDYDEAAAAKAGKSEWEIEFEKFKLEQKKQPDVASSDGDFSDEPESEERDEVPELVSSSKSKSKTKRKARTALSSVSMSSSALFRNEGLTLLDDRFDKVEEEYTPIKDERELIDPDQKDVFDLVNDNQFNDIMDEFLVSYGPTLGRKKAPSRMSNSKKKSSLEELDNVRKMLGRARI</sequence>
<comment type="function">
    <text evidence="1">Involved in protein transport. Non-ribosomal factor required for efficient nuclear export of the ribosomal 40S subunit. May participate in intracellular sorting of GAP1 out of the endosome (By similarity).</text>
</comment>
<comment type="subcellular location">
    <subcellularLocation>
        <location evidence="1">Nucleus</location>
    </subcellularLocation>
    <subcellularLocation>
        <location evidence="1">Cytoplasm</location>
    </subcellularLocation>
    <text evidence="1">Shuttles between the nucleus and the cytoplasm.</text>
</comment>
<comment type="similarity">
    <text evidence="4">Belongs to the LTV1 family.</text>
</comment>
<feature type="chain" id="PRO_0000116480" description="Protein LTV1">
    <location>
        <begin position="1"/>
        <end position="386"/>
    </location>
</feature>
<feature type="region of interest" description="Disordered" evidence="2">
    <location>
        <begin position="103"/>
        <end position="126"/>
    </location>
</feature>
<feature type="region of interest" description="Disordered" evidence="2">
    <location>
        <begin position="198"/>
        <end position="219"/>
    </location>
</feature>
<feature type="region of interest" description="Disordered" evidence="2">
    <location>
        <begin position="236"/>
        <end position="287"/>
    </location>
</feature>
<feature type="region of interest" description="Disordered" evidence="2">
    <location>
        <begin position="353"/>
        <end position="374"/>
    </location>
</feature>
<feature type="compositionally biased region" description="Acidic residues" evidence="2">
    <location>
        <begin position="248"/>
        <end position="262"/>
    </location>
</feature>
<feature type="compositionally biased region" description="Basic residues" evidence="2">
    <location>
        <begin position="270"/>
        <end position="279"/>
    </location>
</feature>
<feature type="compositionally biased region" description="Basic residues" evidence="2">
    <location>
        <begin position="354"/>
        <end position="368"/>
    </location>
</feature>
<feature type="modified residue" description="Phosphoserine" evidence="3">
    <location>
        <position position="171"/>
    </location>
</feature>
<feature type="modified residue" description="Phosphoserine" evidence="3">
    <location>
        <position position="179"/>
    </location>
</feature>
<feature type="modified residue" description="Phosphoserine" evidence="3">
    <location>
        <position position="244"/>
    </location>
</feature>
<feature type="modified residue" description="Phosphoserine" evidence="3">
    <location>
        <position position="245"/>
    </location>
</feature>
<feature type="modified residue" description="Phosphoserine" evidence="3">
    <location>
        <position position="286"/>
    </location>
</feature>